<organism>
    <name type="scientific">Arthroderma benhamiae</name>
    <name type="common">Trichophyton mentagrophytes</name>
    <dbReference type="NCBI Taxonomy" id="63400"/>
    <lineage>
        <taxon>Eukaryota</taxon>
        <taxon>Fungi</taxon>
        <taxon>Dikarya</taxon>
        <taxon>Ascomycota</taxon>
        <taxon>Pezizomycotina</taxon>
        <taxon>Eurotiomycetes</taxon>
        <taxon>Eurotiomycetidae</taxon>
        <taxon>Onygenales</taxon>
        <taxon>Arthrodermataceae</taxon>
        <taxon>Trichophyton</taxon>
    </lineage>
</organism>
<evidence type="ECO:0000250" key="1"/>
<evidence type="ECO:0000255" key="2"/>
<evidence type="ECO:0000255" key="3">
    <source>
        <dbReference type="PROSITE-ProRule" id="PRU01240"/>
    </source>
</evidence>
<evidence type="ECO:0000256" key="4">
    <source>
        <dbReference type="SAM" id="MobiDB-lite"/>
    </source>
</evidence>
<evidence type="ECO:0000305" key="5"/>
<feature type="signal peptide" evidence="2">
    <location>
        <begin position="1"/>
        <end position="20"/>
    </location>
</feature>
<feature type="propeptide" id="PRO_0000380796" evidence="1">
    <location>
        <begin position="21"/>
        <end position="116"/>
    </location>
</feature>
<feature type="chain" id="PRO_0000380797" description="Subtilisin-like protease 5">
    <location>
        <begin position="117"/>
        <end position="396"/>
    </location>
</feature>
<feature type="domain" description="Inhibitor I9" evidence="2">
    <location>
        <begin position="37"/>
        <end position="113"/>
    </location>
</feature>
<feature type="domain" description="Peptidase S8" evidence="3">
    <location>
        <begin position="125"/>
        <end position="396"/>
    </location>
</feature>
<feature type="region of interest" description="Disordered" evidence="4">
    <location>
        <begin position="377"/>
        <end position="396"/>
    </location>
</feature>
<feature type="compositionally biased region" description="Polar residues" evidence="4">
    <location>
        <begin position="377"/>
        <end position="389"/>
    </location>
</feature>
<feature type="active site" description="Charge relay system" evidence="3">
    <location>
        <position position="156"/>
    </location>
</feature>
<feature type="active site" description="Charge relay system" evidence="3">
    <location>
        <position position="187"/>
    </location>
</feature>
<feature type="active site" description="Charge relay system" evidence="3">
    <location>
        <position position="342"/>
    </location>
</feature>
<feature type="glycosylation site" description="N-linked (GlcNAc...) asparagine" evidence="2">
    <location>
        <position position="63"/>
    </location>
</feature>
<feature type="glycosylation site" description="N-linked (GlcNAc...) asparagine" evidence="2">
    <location>
        <position position="230"/>
    </location>
</feature>
<feature type="glycosylation site" description="N-linked (GlcNAc...) asparagine" evidence="2">
    <location>
        <position position="248"/>
    </location>
</feature>
<feature type="glycosylation site" description="N-linked (GlcNAc...) asparagine" evidence="2">
    <location>
        <position position="392"/>
    </location>
</feature>
<accession>Q64K32</accession>
<protein>
    <recommendedName>
        <fullName>Subtilisin-like protease 5</fullName>
        <ecNumber>3.4.21.-</ecNumber>
    </recommendedName>
</protein>
<sequence length="396" mass="41777">MTGFFTILSFSLAALSVTNAAQILSVPKGAEVVPNGYIVVMKDDTSQQDFSSHRVWISSIHHNMTRRGLDGAGVKQTYDFDHLRGYSGIFDEDTIKDISNDPKVAFVEPDAIISQHVVVQQRKAPWGLSRLSNRRGGRNYVFDSSAGSGVWAYVVDSGVDVRHAEFQGRAVWGSNLVDNKNSDGTGHGTHVAGTIAGKTYGIAKKAKVVAVKVLNSEGKGPTSGIIAGINWSIRHARKHGMLQKSVLNMSLGGTYSAGLNHATAQAIKAGMFVSVSAGNDNINSNGNSPASERSVCTIAASTENDGKASFSNWGPAVDLYAPGHNILSARPGGGSQTMSGTSMAAPHAAGVAAYLIAKEGIPGNRACLRLKQLSQPTIRNPGPDTTTRLLYNGSGR</sequence>
<dbReference type="EC" id="3.4.21.-"/>
<dbReference type="EMBL" id="AY437856">
    <property type="protein sequence ID" value="AAS45670.1"/>
    <property type="molecule type" value="Genomic_DNA"/>
</dbReference>
<dbReference type="SMR" id="Q64K32"/>
<dbReference type="GlyCosmos" id="Q64K32">
    <property type="glycosylation" value="4 sites, No reported glycans"/>
</dbReference>
<dbReference type="GO" id="GO:0005576">
    <property type="term" value="C:extracellular region"/>
    <property type="evidence" value="ECO:0007669"/>
    <property type="project" value="UniProtKB-SubCell"/>
</dbReference>
<dbReference type="GO" id="GO:0004252">
    <property type="term" value="F:serine-type endopeptidase activity"/>
    <property type="evidence" value="ECO:0007669"/>
    <property type="project" value="InterPro"/>
</dbReference>
<dbReference type="GO" id="GO:0006508">
    <property type="term" value="P:proteolysis"/>
    <property type="evidence" value="ECO:0007669"/>
    <property type="project" value="UniProtKB-KW"/>
</dbReference>
<dbReference type="CDD" id="cd04077">
    <property type="entry name" value="Peptidases_S8_PCSK9_ProteinaseK_like"/>
    <property type="match status" value="1"/>
</dbReference>
<dbReference type="FunFam" id="3.40.50.200:FF:000014">
    <property type="entry name" value="Proteinase K"/>
    <property type="match status" value="1"/>
</dbReference>
<dbReference type="Gene3D" id="3.30.70.80">
    <property type="entry name" value="Peptidase S8 propeptide/proteinase inhibitor I9"/>
    <property type="match status" value="1"/>
</dbReference>
<dbReference type="Gene3D" id="3.40.50.200">
    <property type="entry name" value="Peptidase S8/S53 domain"/>
    <property type="match status" value="1"/>
</dbReference>
<dbReference type="InterPro" id="IPR034193">
    <property type="entry name" value="PCSK9_ProteinaseK-like"/>
</dbReference>
<dbReference type="InterPro" id="IPR000209">
    <property type="entry name" value="Peptidase_S8/S53_dom"/>
</dbReference>
<dbReference type="InterPro" id="IPR036852">
    <property type="entry name" value="Peptidase_S8/S53_dom_sf"/>
</dbReference>
<dbReference type="InterPro" id="IPR023827">
    <property type="entry name" value="Peptidase_S8_Asp-AS"/>
</dbReference>
<dbReference type="InterPro" id="IPR022398">
    <property type="entry name" value="Peptidase_S8_His-AS"/>
</dbReference>
<dbReference type="InterPro" id="IPR023828">
    <property type="entry name" value="Peptidase_S8_Ser-AS"/>
</dbReference>
<dbReference type="InterPro" id="IPR050131">
    <property type="entry name" value="Peptidase_S8_subtilisin-like"/>
</dbReference>
<dbReference type="InterPro" id="IPR015500">
    <property type="entry name" value="Peptidase_S8_subtilisin-rel"/>
</dbReference>
<dbReference type="InterPro" id="IPR010259">
    <property type="entry name" value="S8pro/Inhibitor_I9"/>
</dbReference>
<dbReference type="InterPro" id="IPR037045">
    <property type="entry name" value="S8pro/Inhibitor_I9_sf"/>
</dbReference>
<dbReference type="PANTHER" id="PTHR43806:SF58">
    <property type="entry name" value="ALKALINE PROTEASE 1-RELATED"/>
    <property type="match status" value="1"/>
</dbReference>
<dbReference type="PANTHER" id="PTHR43806">
    <property type="entry name" value="PEPTIDASE S8"/>
    <property type="match status" value="1"/>
</dbReference>
<dbReference type="Pfam" id="PF05922">
    <property type="entry name" value="Inhibitor_I9"/>
    <property type="match status" value="1"/>
</dbReference>
<dbReference type="Pfam" id="PF00082">
    <property type="entry name" value="Peptidase_S8"/>
    <property type="match status" value="1"/>
</dbReference>
<dbReference type="PRINTS" id="PR00723">
    <property type="entry name" value="SUBTILISIN"/>
</dbReference>
<dbReference type="SUPFAM" id="SSF54897">
    <property type="entry name" value="Protease propeptides/inhibitors"/>
    <property type="match status" value="1"/>
</dbReference>
<dbReference type="SUPFAM" id="SSF52743">
    <property type="entry name" value="Subtilisin-like"/>
    <property type="match status" value="1"/>
</dbReference>
<dbReference type="PROSITE" id="PS51892">
    <property type="entry name" value="SUBTILASE"/>
    <property type="match status" value="1"/>
</dbReference>
<dbReference type="PROSITE" id="PS00136">
    <property type="entry name" value="SUBTILASE_ASP"/>
    <property type="match status" value="1"/>
</dbReference>
<dbReference type="PROSITE" id="PS00137">
    <property type="entry name" value="SUBTILASE_HIS"/>
    <property type="match status" value="1"/>
</dbReference>
<dbReference type="PROSITE" id="PS00138">
    <property type="entry name" value="SUBTILASE_SER"/>
    <property type="match status" value="1"/>
</dbReference>
<comment type="function">
    <text evidence="1">Secreted subtilisin-like serine protease with keratinolytic activity that contributes to pathogenicity.</text>
</comment>
<comment type="subcellular location">
    <subcellularLocation>
        <location evidence="1">Secreted</location>
    </subcellularLocation>
</comment>
<comment type="similarity">
    <text evidence="5">Belongs to the peptidase S8 family.</text>
</comment>
<keyword id="KW-0325">Glycoprotein</keyword>
<keyword id="KW-0378">Hydrolase</keyword>
<keyword id="KW-0645">Protease</keyword>
<keyword id="KW-0964">Secreted</keyword>
<keyword id="KW-0720">Serine protease</keyword>
<keyword id="KW-0732">Signal</keyword>
<keyword id="KW-0843">Virulence</keyword>
<keyword id="KW-0865">Zymogen</keyword>
<gene>
    <name type="primary">SUB5</name>
</gene>
<proteinExistence type="inferred from homology"/>
<reference key="1">
    <citation type="journal article" date="2004" name="Gene">
        <title>Secreted subtilisin gene family in Trichophyton rubrum.</title>
        <authorList>
            <person name="Jousson O."/>
            <person name="Lechenne B."/>
            <person name="Bontems O."/>
            <person name="Mignon B."/>
            <person name="Reichard U."/>
            <person name="Barblan J."/>
            <person name="Quadroni M."/>
            <person name="Monod M."/>
        </authorList>
    </citation>
    <scope>NUCLEOTIDE SEQUENCE [GENOMIC DNA]</scope>
</reference>
<name>SUB5_ARTBE</name>